<gene>
    <name type="ordered locus">SynWH7803_1684</name>
</gene>
<comment type="similarity">
    <text evidence="1">Belongs to the UPF0145 family.</text>
</comment>
<proteinExistence type="inferred from homology"/>
<accession>A5GME5</accession>
<evidence type="ECO:0000255" key="1">
    <source>
        <dbReference type="HAMAP-Rule" id="MF_00338"/>
    </source>
</evidence>
<sequence length="113" mass="11991">MLITTTPTIEGRKILHYRGLVTGETIIGANIFRDILASITDVIGGRSKAYEDALMTARDNAIEEMKNRATLMQANAIVGVDLDYEVFGEGGMMMVSVSGTAVLLEGGTGVPLA</sequence>
<reference key="1">
    <citation type="submission" date="2006-05" db="EMBL/GenBank/DDBJ databases">
        <authorList>
            <consortium name="Genoscope"/>
        </authorList>
    </citation>
    <scope>NUCLEOTIDE SEQUENCE [LARGE SCALE GENOMIC DNA]</scope>
    <source>
        <strain>WH7803</strain>
    </source>
</reference>
<name>Y1684_SYNPW</name>
<dbReference type="EMBL" id="CT971583">
    <property type="protein sequence ID" value="CAK24110.1"/>
    <property type="molecule type" value="Genomic_DNA"/>
</dbReference>
<dbReference type="SMR" id="A5GME5"/>
<dbReference type="STRING" id="32051.SynWH7803_1684"/>
<dbReference type="KEGG" id="syx:SynWH7803_1684"/>
<dbReference type="eggNOG" id="COG0393">
    <property type="taxonomic scope" value="Bacteria"/>
</dbReference>
<dbReference type="HOGENOM" id="CLU_117144_3_2_3"/>
<dbReference type="OrthoDB" id="9796448at2"/>
<dbReference type="Proteomes" id="UP000001566">
    <property type="component" value="Chromosome"/>
</dbReference>
<dbReference type="Gene3D" id="3.30.110.70">
    <property type="entry name" value="Hypothetical protein apc22750. Chain B"/>
    <property type="match status" value="1"/>
</dbReference>
<dbReference type="HAMAP" id="MF_00338">
    <property type="entry name" value="UPF0145"/>
    <property type="match status" value="1"/>
</dbReference>
<dbReference type="InterPro" id="IPR035439">
    <property type="entry name" value="UPF0145_dom_sf"/>
</dbReference>
<dbReference type="InterPro" id="IPR002765">
    <property type="entry name" value="UPF0145_YbjQ-like"/>
</dbReference>
<dbReference type="PANTHER" id="PTHR34068">
    <property type="entry name" value="UPF0145 PROTEIN YBJQ"/>
    <property type="match status" value="1"/>
</dbReference>
<dbReference type="PANTHER" id="PTHR34068:SF1">
    <property type="entry name" value="UPF0145 PROTEIN YBJQ"/>
    <property type="match status" value="1"/>
</dbReference>
<dbReference type="Pfam" id="PF01906">
    <property type="entry name" value="YbjQ_1"/>
    <property type="match status" value="1"/>
</dbReference>
<dbReference type="SUPFAM" id="SSF117782">
    <property type="entry name" value="YbjQ-like"/>
    <property type="match status" value="1"/>
</dbReference>
<organism>
    <name type="scientific">Synechococcus sp. (strain WH7803)</name>
    <dbReference type="NCBI Taxonomy" id="32051"/>
    <lineage>
        <taxon>Bacteria</taxon>
        <taxon>Bacillati</taxon>
        <taxon>Cyanobacteriota</taxon>
        <taxon>Cyanophyceae</taxon>
        <taxon>Synechococcales</taxon>
        <taxon>Synechococcaceae</taxon>
        <taxon>Synechococcus</taxon>
    </lineage>
</organism>
<protein>
    <recommendedName>
        <fullName evidence="1">UPF0145 protein SynWH7803_1684</fullName>
    </recommendedName>
</protein>
<feature type="chain" id="PRO_1000013034" description="UPF0145 protein SynWH7803_1684">
    <location>
        <begin position="1"/>
        <end position="113"/>
    </location>
</feature>
<keyword id="KW-1185">Reference proteome</keyword>